<name>GREB_VIBVY</name>
<reference key="1">
    <citation type="journal article" date="2003" name="Genome Res.">
        <title>Comparative genome analysis of Vibrio vulnificus, a marine pathogen.</title>
        <authorList>
            <person name="Chen C.-Y."/>
            <person name="Wu K.-M."/>
            <person name="Chang Y.-C."/>
            <person name="Chang C.-H."/>
            <person name="Tsai H.-C."/>
            <person name="Liao T.-L."/>
            <person name="Liu Y.-M."/>
            <person name="Chen H.-J."/>
            <person name="Shen A.B.-T."/>
            <person name="Li J.-C."/>
            <person name="Su T.-L."/>
            <person name="Shao C.-P."/>
            <person name="Lee C.-T."/>
            <person name="Hor L.-I."/>
            <person name="Tsai S.-F."/>
        </authorList>
    </citation>
    <scope>NUCLEOTIDE SEQUENCE [LARGE SCALE GENOMIC DNA]</scope>
    <source>
        <strain>YJ016</strain>
    </source>
</reference>
<proteinExistence type="inferred from homology"/>
<dbReference type="EMBL" id="BA000037">
    <property type="protein sequence ID" value="BAC92999.1"/>
    <property type="molecule type" value="Genomic_DNA"/>
</dbReference>
<dbReference type="RefSeq" id="WP_011149222.1">
    <property type="nucleotide sequence ID" value="NC_005139.1"/>
</dbReference>
<dbReference type="SMR" id="Q7MPX6"/>
<dbReference type="STRING" id="672.VV93_v1c02140"/>
<dbReference type="KEGG" id="vvy:VV0235"/>
<dbReference type="PATRIC" id="fig|196600.6.peg.272"/>
<dbReference type="eggNOG" id="COG0782">
    <property type="taxonomic scope" value="Bacteria"/>
</dbReference>
<dbReference type="HOGENOM" id="CLU_101379_3_0_6"/>
<dbReference type="Proteomes" id="UP000002675">
    <property type="component" value="Chromosome I"/>
</dbReference>
<dbReference type="GO" id="GO:0003677">
    <property type="term" value="F:DNA binding"/>
    <property type="evidence" value="ECO:0007669"/>
    <property type="project" value="UniProtKB-UniRule"/>
</dbReference>
<dbReference type="GO" id="GO:0070063">
    <property type="term" value="F:RNA polymerase binding"/>
    <property type="evidence" value="ECO:0007669"/>
    <property type="project" value="InterPro"/>
</dbReference>
<dbReference type="GO" id="GO:0006354">
    <property type="term" value="P:DNA-templated transcription elongation"/>
    <property type="evidence" value="ECO:0007669"/>
    <property type="project" value="TreeGrafter"/>
</dbReference>
<dbReference type="GO" id="GO:0032784">
    <property type="term" value="P:regulation of DNA-templated transcription elongation"/>
    <property type="evidence" value="ECO:0007669"/>
    <property type="project" value="UniProtKB-UniRule"/>
</dbReference>
<dbReference type="FunFam" id="1.10.287.180:FF:000001">
    <property type="entry name" value="Transcription elongation factor GreA"/>
    <property type="match status" value="1"/>
</dbReference>
<dbReference type="FunFam" id="3.10.50.30:FF:000001">
    <property type="entry name" value="Transcription elongation factor GreA"/>
    <property type="match status" value="1"/>
</dbReference>
<dbReference type="Gene3D" id="3.10.50.30">
    <property type="entry name" value="Transcription elongation factor, GreA/GreB, C-terminal domain"/>
    <property type="match status" value="1"/>
</dbReference>
<dbReference type="Gene3D" id="1.10.287.180">
    <property type="entry name" value="Transcription elongation factor, GreA/GreB, N-terminal domain"/>
    <property type="match status" value="1"/>
</dbReference>
<dbReference type="HAMAP" id="MF_00105">
    <property type="entry name" value="GreA_GreB"/>
    <property type="match status" value="1"/>
</dbReference>
<dbReference type="HAMAP" id="MF_00930">
    <property type="entry name" value="GreB"/>
    <property type="match status" value="1"/>
</dbReference>
<dbReference type="InterPro" id="IPR036953">
    <property type="entry name" value="GreA/GreB_C_sf"/>
</dbReference>
<dbReference type="InterPro" id="IPR018151">
    <property type="entry name" value="TF_GreA/GreB_CS"/>
</dbReference>
<dbReference type="InterPro" id="IPR028624">
    <property type="entry name" value="Tscrpt_elong_fac_GreA/B"/>
</dbReference>
<dbReference type="InterPro" id="IPR001437">
    <property type="entry name" value="Tscrpt_elong_fac_GreA/B_C"/>
</dbReference>
<dbReference type="InterPro" id="IPR023459">
    <property type="entry name" value="Tscrpt_elong_fac_GreA/B_fam"/>
</dbReference>
<dbReference type="InterPro" id="IPR022691">
    <property type="entry name" value="Tscrpt_elong_fac_GreA/B_N"/>
</dbReference>
<dbReference type="InterPro" id="IPR036805">
    <property type="entry name" value="Tscrpt_elong_fac_GreA/B_N_sf"/>
</dbReference>
<dbReference type="InterPro" id="IPR006358">
    <property type="entry name" value="Tscrpt_elong_fac_GreB"/>
</dbReference>
<dbReference type="NCBIfam" id="TIGR01461">
    <property type="entry name" value="greB"/>
    <property type="match status" value="1"/>
</dbReference>
<dbReference type="NCBIfam" id="NF002506">
    <property type="entry name" value="PRK01885.1"/>
    <property type="match status" value="1"/>
</dbReference>
<dbReference type="PANTHER" id="PTHR30437">
    <property type="entry name" value="TRANSCRIPTION ELONGATION FACTOR GREA"/>
    <property type="match status" value="1"/>
</dbReference>
<dbReference type="PANTHER" id="PTHR30437:SF6">
    <property type="entry name" value="TRANSCRIPTION ELONGATION FACTOR GREB"/>
    <property type="match status" value="1"/>
</dbReference>
<dbReference type="Pfam" id="PF01272">
    <property type="entry name" value="GreA_GreB"/>
    <property type="match status" value="1"/>
</dbReference>
<dbReference type="Pfam" id="PF03449">
    <property type="entry name" value="GreA_GreB_N"/>
    <property type="match status" value="1"/>
</dbReference>
<dbReference type="PIRSF" id="PIRSF006092">
    <property type="entry name" value="GreA_GreB"/>
    <property type="match status" value="1"/>
</dbReference>
<dbReference type="SUPFAM" id="SSF54534">
    <property type="entry name" value="FKBP-like"/>
    <property type="match status" value="1"/>
</dbReference>
<dbReference type="SUPFAM" id="SSF46557">
    <property type="entry name" value="GreA transcript cleavage protein, N-terminal domain"/>
    <property type="match status" value="1"/>
</dbReference>
<dbReference type="PROSITE" id="PS00829">
    <property type="entry name" value="GREAB_1"/>
    <property type="match status" value="1"/>
</dbReference>
<dbReference type="PROSITE" id="PS00830">
    <property type="entry name" value="GREAB_2"/>
    <property type="match status" value="1"/>
</dbReference>
<protein>
    <recommendedName>
        <fullName evidence="1">Transcription elongation factor GreB</fullName>
    </recommendedName>
    <alternativeName>
        <fullName evidence="1">Transcript cleavage factor GreB</fullName>
    </alternativeName>
</protein>
<feature type="chain" id="PRO_0000176995" description="Transcription elongation factor GreB">
    <location>
        <begin position="1"/>
        <end position="160"/>
    </location>
</feature>
<accession>Q7MPX6</accession>
<organism>
    <name type="scientific">Vibrio vulnificus (strain YJ016)</name>
    <dbReference type="NCBI Taxonomy" id="196600"/>
    <lineage>
        <taxon>Bacteria</taxon>
        <taxon>Pseudomonadati</taxon>
        <taxon>Pseudomonadota</taxon>
        <taxon>Gammaproteobacteria</taxon>
        <taxon>Vibrionales</taxon>
        <taxon>Vibrionaceae</taxon>
        <taxon>Vibrio</taxon>
    </lineage>
</organism>
<keyword id="KW-0238">DNA-binding</keyword>
<keyword id="KW-0804">Transcription</keyword>
<keyword id="KW-0805">Transcription regulation</keyword>
<comment type="function">
    <text evidence="1">Necessary for efficient RNA polymerase transcription elongation past template-encoded arresting sites. The arresting sites in DNA have the property of trapping a certain fraction of elongating RNA polymerases that pass through, resulting in locked ternary complexes. Cleavage of the nascent transcript by cleavage factors such as GreA or GreB allows the resumption of elongation from the new 3'terminus. GreB releases sequences of up to 9 nucleotides in length.</text>
</comment>
<comment type="similarity">
    <text evidence="1">Belongs to the GreA/GreB family. GreB subfamily.</text>
</comment>
<gene>
    <name evidence="1" type="primary">greB</name>
    <name type="ordered locus">VV0235</name>
</gene>
<sequence length="160" mass="18711">MKTKMITREGYNKLKQELDYLWKEHRPEITQKVSWAASLGDRSENADYTYNKRLLRQIDRRVRFLSKFLPEVKIVDYAPQQEGKVFFGAWVEIENEAGEVMKFRIVGPEEIYGDAKGYISIDSPMARALLKKEVDDEVQVPTPSGIKEWFINSIEYDKGQ</sequence>
<evidence type="ECO:0000255" key="1">
    <source>
        <dbReference type="HAMAP-Rule" id="MF_00930"/>
    </source>
</evidence>